<reference key="1">
    <citation type="journal article" date="2006" name="Genome Res.">
        <title>Massive genome erosion and functional adaptations provide insights into the symbiotic lifestyle of Sodalis glossinidius in the tsetse host.</title>
        <authorList>
            <person name="Toh H."/>
            <person name="Weiss B.L."/>
            <person name="Perkin S.A.H."/>
            <person name="Yamashita A."/>
            <person name="Oshima K."/>
            <person name="Hattori M."/>
            <person name="Aksoy S."/>
        </authorList>
    </citation>
    <scope>NUCLEOTIDE SEQUENCE [LARGE SCALE GENOMIC DNA]</scope>
    <source>
        <strain>morsitans</strain>
    </source>
</reference>
<sequence>MTTDTHTLHIEEILELLPHRFPFLLVDRVLDFEKGKFLRAVKNVSFNEPFFQGHFPGKPIFPGVLILEAMAQATGILAFKSAGKLAPGELYYFAAIDEARFKRPVQPGDQMILEVEFIKERRGVARFKGVAKVDGEVACEASMMCARRREA</sequence>
<organism>
    <name type="scientific">Sodalis glossinidius (strain morsitans)</name>
    <dbReference type="NCBI Taxonomy" id="343509"/>
    <lineage>
        <taxon>Bacteria</taxon>
        <taxon>Pseudomonadati</taxon>
        <taxon>Pseudomonadota</taxon>
        <taxon>Gammaproteobacteria</taxon>
        <taxon>Enterobacterales</taxon>
        <taxon>Bruguierivoracaceae</taxon>
        <taxon>Sodalis</taxon>
    </lineage>
</organism>
<feature type="chain" id="PRO_0000242901" description="3-hydroxyacyl-[acyl-carrier-protein] dehydratase FabZ">
    <location>
        <begin position="1"/>
        <end position="151"/>
    </location>
</feature>
<feature type="active site" evidence="1">
    <location>
        <position position="54"/>
    </location>
</feature>
<gene>
    <name evidence="1" type="primary">fabZ</name>
    <name type="ordered locus">SG1932</name>
</gene>
<comment type="function">
    <text evidence="1">Involved in unsaturated fatty acids biosynthesis. Catalyzes the dehydration of short chain beta-hydroxyacyl-ACPs and long chain saturated and unsaturated beta-hydroxyacyl-ACPs.</text>
</comment>
<comment type="catalytic activity">
    <reaction evidence="1">
        <text>a (3R)-hydroxyacyl-[ACP] = a (2E)-enoyl-[ACP] + H2O</text>
        <dbReference type="Rhea" id="RHEA:13097"/>
        <dbReference type="Rhea" id="RHEA-COMP:9925"/>
        <dbReference type="Rhea" id="RHEA-COMP:9945"/>
        <dbReference type="ChEBI" id="CHEBI:15377"/>
        <dbReference type="ChEBI" id="CHEBI:78784"/>
        <dbReference type="ChEBI" id="CHEBI:78827"/>
        <dbReference type="EC" id="4.2.1.59"/>
    </reaction>
</comment>
<comment type="subcellular location">
    <subcellularLocation>
        <location evidence="1">Cytoplasm</location>
    </subcellularLocation>
</comment>
<comment type="similarity">
    <text evidence="1">Belongs to the thioester dehydratase family. FabZ subfamily.</text>
</comment>
<keyword id="KW-0963">Cytoplasm</keyword>
<keyword id="KW-0441">Lipid A biosynthesis</keyword>
<keyword id="KW-0444">Lipid biosynthesis</keyword>
<keyword id="KW-0443">Lipid metabolism</keyword>
<keyword id="KW-0456">Lyase</keyword>
<protein>
    <recommendedName>
        <fullName evidence="1">3-hydroxyacyl-[acyl-carrier-protein] dehydratase FabZ</fullName>
        <ecNumber evidence="1">4.2.1.59</ecNumber>
    </recommendedName>
    <alternativeName>
        <fullName evidence="1">(3R)-hydroxymyristoyl-[acyl-carrier-protein] dehydratase</fullName>
        <shortName evidence="1">(3R)-hydroxymyristoyl-ACP dehydrase</shortName>
    </alternativeName>
    <alternativeName>
        <fullName evidence="1">Beta-hydroxyacyl-ACP dehydratase</fullName>
    </alternativeName>
</protein>
<name>FABZ_SODGM</name>
<dbReference type="EC" id="4.2.1.59" evidence="1"/>
<dbReference type="EMBL" id="AP008232">
    <property type="protein sequence ID" value="BAE75207.1"/>
    <property type="molecule type" value="Genomic_DNA"/>
</dbReference>
<dbReference type="RefSeq" id="WP_011411663.1">
    <property type="nucleotide sequence ID" value="NZ_LN854557.1"/>
</dbReference>
<dbReference type="SMR" id="Q2NRL8"/>
<dbReference type="STRING" id="343509.SG1932"/>
<dbReference type="KEGG" id="sgl:SG1932"/>
<dbReference type="eggNOG" id="COG0764">
    <property type="taxonomic scope" value="Bacteria"/>
</dbReference>
<dbReference type="HOGENOM" id="CLU_078912_1_0_6"/>
<dbReference type="OrthoDB" id="9772788at2"/>
<dbReference type="BioCyc" id="SGLO343509:SGP1_RS17785-MONOMER"/>
<dbReference type="Proteomes" id="UP000001932">
    <property type="component" value="Chromosome"/>
</dbReference>
<dbReference type="GO" id="GO:0005737">
    <property type="term" value="C:cytoplasm"/>
    <property type="evidence" value="ECO:0007669"/>
    <property type="project" value="UniProtKB-SubCell"/>
</dbReference>
<dbReference type="GO" id="GO:0016020">
    <property type="term" value="C:membrane"/>
    <property type="evidence" value="ECO:0007669"/>
    <property type="project" value="GOC"/>
</dbReference>
<dbReference type="GO" id="GO:0019171">
    <property type="term" value="F:(3R)-hydroxyacyl-[acyl-carrier-protein] dehydratase activity"/>
    <property type="evidence" value="ECO:0007669"/>
    <property type="project" value="UniProtKB-EC"/>
</dbReference>
<dbReference type="GO" id="GO:0006633">
    <property type="term" value="P:fatty acid biosynthetic process"/>
    <property type="evidence" value="ECO:0007669"/>
    <property type="project" value="UniProtKB-UniRule"/>
</dbReference>
<dbReference type="GO" id="GO:0009245">
    <property type="term" value="P:lipid A biosynthetic process"/>
    <property type="evidence" value="ECO:0007669"/>
    <property type="project" value="UniProtKB-UniRule"/>
</dbReference>
<dbReference type="CDD" id="cd01288">
    <property type="entry name" value="FabZ"/>
    <property type="match status" value="1"/>
</dbReference>
<dbReference type="FunFam" id="3.10.129.10:FF:000001">
    <property type="entry name" value="3-hydroxyacyl-[acyl-carrier-protein] dehydratase FabZ"/>
    <property type="match status" value="1"/>
</dbReference>
<dbReference type="Gene3D" id="3.10.129.10">
    <property type="entry name" value="Hotdog Thioesterase"/>
    <property type="match status" value="1"/>
</dbReference>
<dbReference type="HAMAP" id="MF_00406">
    <property type="entry name" value="FabZ"/>
    <property type="match status" value="1"/>
</dbReference>
<dbReference type="InterPro" id="IPR013114">
    <property type="entry name" value="FabA_FabZ"/>
</dbReference>
<dbReference type="InterPro" id="IPR010084">
    <property type="entry name" value="FabZ"/>
</dbReference>
<dbReference type="InterPro" id="IPR029069">
    <property type="entry name" value="HotDog_dom_sf"/>
</dbReference>
<dbReference type="NCBIfam" id="TIGR01750">
    <property type="entry name" value="fabZ"/>
    <property type="match status" value="1"/>
</dbReference>
<dbReference type="NCBIfam" id="NF000582">
    <property type="entry name" value="PRK00006.1"/>
    <property type="match status" value="1"/>
</dbReference>
<dbReference type="PANTHER" id="PTHR30272">
    <property type="entry name" value="3-HYDROXYACYL-[ACYL-CARRIER-PROTEIN] DEHYDRATASE"/>
    <property type="match status" value="1"/>
</dbReference>
<dbReference type="PANTHER" id="PTHR30272:SF1">
    <property type="entry name" value="3-HYDROXYACYL-[ACYL-CARRIER-PROTEIN] DEHYDRATASE"/>
    <property type="match status" value="1"/>
</dbReference>
<dbReference type="Pfam" id="PF07977">
    <property type="entry name" value="FabA"/>
    <property type="match status" value="1"/>
</dbReference>
<dbReference type="SUPFAM" id="SSF54637">
    <property type="entry name" value="Thioesterase/thiol ester dehydrase-isomerase"/>
    <property type="match status" value="1"/>
</dbReference>
<proteinExistence type="inferred from homology"/>
<evidence type="ECO:0000255" key="1">
    <source>
        <dbReference type="HAMAP-Rule" id="MF_00406"/>
    </source>
</evidence>
<accession>Q2NRL8</accession>